<reference key="1">
    <citation type="journal article" date="1981" name="Nature">
        <title>Structure of the neuraminidase gene in human influenza virus A/PR/8/34.</title>
        <authorList>
            <person name="Fields S."/>
            <person name="Winter G."/>
            <person name="Brownlee G.G."/>
        </authorList>
    </citation>
    <scope>NUCLEOTIDE SEQUENCE [GENOMIC RNA]</scope>
</reference>
<reference key="2">
    <citation type="journal article" date="2001" name="Philos. Trans. R. Soc. Lond., B, Biol. Sci.">
        <title>Plasmid-only rescue of influenza A virus vaccine candidates.</title>
        <authorList>
            <person name="Schickli J.H."/>
            <person name="Flandorfer A."/>
            <person name="Nakaya T."/>
            <person name="Martinez-Sobrido L."/>
            <person name="Garcia-Sastre A."/>
            <person name="Palese P."/>
        </authorList>
    </citation>
    <scope>NUCLEOTIDE SEQUENCE [GENOMIC RNA]</scope>
</reference>
<reference key="3">
    <citation type="journal article" date="2004" name="Virus Res.">
        <title>Efficient generation and growth of influenza virus A/PR/8/34 from eight cDNA fragments.</title>
        <authorList>
            <person name="de Wit E."/>
            <person name="Spronken M.I.J."/>
            <person name="Bestebroer T.M."/>
            <person name="Rimmelzwaan G.F."/>
            <person name="Osterhaus A.D.M.E."/>
            <person name="Fouchier R.A.M."/>
        </authorList>
    </citation>
    <scope>NUCLEOTIDE SEQUENCE [GENOMIC RNA]</scope>
    <scope>REVERSE GENETICS</scope>
</reference>
<reference key="4">
    <citation type="submission" date="2006-03" db="EMBL/GenBank/DDBJ databases">
        <title>The NIAID influenza genome sequencing project.</title>
        <authorList>
            <person name="Ghedin E."/>
            <person name="Spiro D."/>
            <person name="Miller N."/>
            <person name="Zaborsky J."/>
            <person name="Feldblyum T."/>
            <person name="Subbu V."/>
            <person name="Shumway M."/>
            <person name="Sparenborg J."/>
            <person name="Groveman L."/>
            <person name="Halpin R."/>
            <person name="Sitz J."/>
            <person name="Koo H."/>
            <person name="Salzberg S.L."/>
            <person name="Webster R.G."/>
            <person name="Hoffmann E."/>
            <person name="Krauss S."/>
            <person name="Naeve C."/>
            <person name="Bao Y."/>
            <person name="Bolotov P."/>
            <person name="Dernovoy D."/>
            <person name="Kiryutin B."/>
            <person name="Lipman D.J."/>
            <person name="Tatusova T."/>
        </authorList>
    </citation>
    <scope>NUCLEOTIDE SEQUENCE [GENOMIC RNA]</scope>
</reference>
<reference key="5">
    <citation type="journal article" date="1982" name="Virology">
        <title>Sequence variation at the 3' end of the neuraminidase gene from 39 influenza type A viruses.</title>
        <authorList>
            <person name="Blok J."/>
            <person name="Air G.M."/>
        </authorList>
    </citation>
    <scope>NUCLEOTIDE SEQUENCE [GENOMIC RNA] OF 1-71</scope>
</reference>
<reference key="6">
    <citation type="journal article" date="2004" name="Virus Res.">
        <title>Assembly and budding of influenza virus.</title>
        <authorList>
            <person name="Nayak D.P."/>
            <person name="Hui E.K."/>
            <person name="Barman S."/>
        </authorList>
    </citation>
    <scope>REVIEW</scope>
</reference>
<reference key="7">
    <citation type="journal article" date="2005" name="N. Engl. J. Med.">
        <title>Neuraminidase inhibitors for influenza.</title>
        <authorList>
            <person name="Moscona A."/>
        </authorList>
    </citation>
    <scope>REVIEW</scope>
</reference>
<reference key="8">
    <citation type="journal article" date="2005" name="Biol. Pharm. Bull.">
        <title>Sialobiology of influenza: molecular mechanism of host range variation of influenza viruses.</title>
        <authorList>
            <person name="Suzuki Y."/>
        </authorList>
    </citation>
    <scope>REVIEW</scope>
</reference>
<keyword id="KW-0002">3D-structure</keyword>
<keyword id="KW-0106">Calcium</keyword>
<keyword id="KW-1015">Disulfide bond</keyword>
<keyword id="KW-0325">Glycoprotein</keyword>
<keyword id="KW-0326">Glycosidase</keyword>
<keyword id="KW-1032">Host cell membrane</keyword>
<keyword id="KW-1043">Host membrane</keyword>
<keyword id="KW-0378">Hydrolase</keyword>
<keyword id="KW-0472">Membrane</keyword>
<keyword id="KW-0479">Metal-binding</keyword>
<keyword id="KW-1185">Reference proteome</keyword>
<keyword id="KW-0735">Signal-anchor</keyword>
<keyword id="KW-0812">Transmembrane</keyword>
<keyword id="KW-1133">Transmembrane helix</keyword>
<keyword id="KW-0946">Virion</keyword>
<protein>
    <recommendedName>
        <fullName evidence="1">Neuraminidase</fullName>
        <ecNumber evidence="1">3.2.1.18</ecNumber>
    </recommendedName>
</protein>
<proteinExistence type="evidence at protein level"/>
<dbReference type="EC" id="3.2.1.18" evidence="1"/>
<dbReference type="EMBL" id="J02146">
    <property type="protein sequence ID" value="AAA43412.1"/>
    <property type="molecule type" value="Genomic_RNA"/>
</dbReference>
<dbReference type="EMBL" id="AF389120">
    <property type="protein sequence ID" value="AAM75160.1"/>
    <property type="molecule type" value="Genomic_RNA"/>
</dbReference>
<dbReference type="EMBL" id="EF467823">
    <property type="protein sequence ID" value="ABO21711.1"/>
    <property type="molecule type" value="Genomic_RNA"/>
</dbReference>
<dbReference type="EMBL" id="CY009446">
    <property type="protein sequence ID" value="ABD77678.1"/>
    <property type="molecule type" value="Genomic_RNA"/>
</dbReference>
<dbReference type="EMBL" id="K01031">
    <property type="protein sequence ID" value="AAA43415.1"/>
    <property type="molecule type" value="Genomic_RNA"/>
</dbReference>
<dbReference type="RefSeq" id="NP_040981.1">
    <property type="nucleotide sequence ID" value="NC_002018.1"/>
</dbReference>
<dbReference type="PDB" id="6WZY">
    <property type="method" value="X-ray"/>
    <property type="resolution" value="1.50 A"/>
    <property type="chains" value="C=181-190"/>
</dbReference>
<dbReference type="PDB" id="6X00">
    <property type="method" value="X-ray"/>
    <property type="resolution" value="1.55 A"/>
    <property type="chains" value="C=181-191"/>
</dbReference>
<dbReference type="PDBsum" id="6WZY"/>
<dbReference type="PDBsum" id="6X00"/>
<dbReference type="SMR" id="P03468"/>
<dbReference type="IntAct" id="P03468">
    <property type="interactions" value="20"/>
</dbReference>
<dbReference type="BindingDB" id="P03468"/>
<dbReference type="ChEMBL" id="CHEMBL2051"/>
<dbReference type="DrugCentral" id="P03468"/>
<dbReference type="CAZy" id="GH34">
    <property type="family name" value="Glycoside Hydrolase Family 34"/>
</dbReference>
<dbReference type="GlyCosmos" id="P03468">
    <property type="glycosylation" value="5 sites, No reported glycans"/>
</dbReference>
<dbReference type="ABCD" id="P03468">
    <property type="antibodies" value="2 sequenced antibodies"/>
</dbReference>
<dbReference type="GeneID" id="956530"/>
<dbReference type="KEGG" id="vg:956530"/>
<dbReference type="OrthoDB" id="2789at10239"/>
<dbReference type="Reactome" id="R-HSA-168255">
    <property type="pathway name" value="Influenza Infection"/>
</dbReference>
<dbReference type="Reactome" id="R-HSA-168275">
    <property type="pathway name" value="Entry of Influenza Virion into Host Cell via Endocytosis"/>
</dbReference>
<dbReference type="Reactome" id="R-HSA-168277">
    <property type="pathway name" value="Influenza Virus Induced Apoptosis"/>
</dbReference>
<dbReference type="Reactome" id="R-HSA-168288">
    <property type="pathway name" value="Fusion of the Influenza Virion to the Host Cell Endosome"/>
</dbReference>
<dbReference type="Reactome" id="R-HSA-168298">
    <property type="pathway name" value="Release"/>
</dbReference>
<dbReference type="Reactome" id="R-HSA-168302">
    <property type="pathway name" value="Budding"/>
</dbReference>
<dbReference type="Reactome" id="R-HSA-168303">
    <property type="pathway name" value="Packaging of Eight RNA Segments"/>
</dbReference>
<dbReference type="Reactome" id="R-HSA-168316">
    <property type="pathway name" value="Assembly of Viral Components at the Budding Site"/>
</dbReference>
<dbReference type="Reactome" id="R-HSA-168336">
    <property type="pathway name" value="Uncoating of the Influenza Virion"/>
</dbReference>
<dbReference type="Reactome" id="R-HSA-168874">
    <property type="pathway name" value="Transport of HA trimer, NA tetramer and M2 tetramer from the endoplasmic reticulum to the Golgi Apparatus"/>
</dbReference>
<dbReference type="Reactome" id="R-HSA-192823">
    <property type="pathway name" value="Viral mRNA Translation"/>
</dbReference>
<dbReference type="SABIO-RK" id="P03468"/>
<dbReference type="PRO" id="PR:P03468"/>
<dbReference type="Proteomes" id="UP000009255">
    <property type="component" value="Genome"/>
</dbReference>
<dbReference type="Proteomes" id="UP000116373">
    <property type="component" value="Genome"/>
</dbReference>
<dbReference type="Proteomes" id="UP000170967">
    <property type="component" value="Genome"/>
</dbReference>
<dbReference type="GO" id="GO:0005576">
    <property type="term" value="C:extracellular region"/>
    <property type="evidence" value="ECO:0000304"/>
    <property type="project" value="Reactome"/>
</dbReference>
<dbReference type="GO" id="GO:0020002">
    <property type="term" value="C:host cell plasma membrane"/>
    <property type="evidence" value="ECO:0007669"/>
    <property type="project" value="UniProtKB-SubCell"/>
</dbReference>
<dbReference type="GO" id="GO:0005886">
    <property type="term" value="C:plasma membrane"/>
    <property type="evidence" value="ECO:0000304"/>
    <property type="project" value="Reactome"/>
</dbReference>
<dbReference type="GO" id="GO:0055036">
    <property type="term" value="C:virion membrane"/>
    <property type="evidence" value="ECO:0007669"/>
    <property type="project" value="UniProtKB-SubCell"/>
</dbReference>
<dbReference type="GO" id="GO:0004308">
    <property type="term" value="F:exo-alpha-sialidase activity"/>
    <property type="evidence" value="ECO:0000304"/>
    <property type="project" value="Reactome"/>
</dbReference>
<dbReference type="GO" id="GO:0046872">
    <property type="term" value="F:metal ion binding"/>
    <property type="evidence" value="ECO:0007669"/>
    <property type="project" value="UniProtKB-UniRule"/>
</dbReference>
<dbReference type="GO" id="GO:0016504">
    <property type="term" value="F:peptidase activator activity"/>
    <property type="evidence" value="ECO:0000304"/>
    <property type="project" value="Reactome"/>
</dbReference>
<dbReference type="GO" id="GO:0005975">
    <property type="term" value="P:carbohydrate metabolic process"/>
    <property type="evidence" value="ECO:0007669"/>
    <property type="project" value="InterPro"/>
</dbReference>
<dbReference type="GO" id="GO:0046761">
    <property type="term" value="P:viral budding from plasma membrane"/>
    <property type="evidence" value="ECO:0000314"/>
    <property type="project" value="UniProtKB"/>
</dbReference>
<dbReference type="GO" id="GO:0019076">
    <property type="term" value="P:viral release from host cell"/>
    <property type="evidence" value="ECO:0000304"/>
    <property type="project" value="Reactome"/>
</dbReference>
<dbReference type="CDD" id="cd15483">
    <property type="entry name" value="Influenza_NA"/>
    <property type="match status" value="1"/>
</dbReference>
<dbReference type="FunFam" id="2.120.10.10:FF:000001">
    <property type="entry name" value="Neuraminidase"/>
    <property type="match status" value="1"/>
</dbReference>
<dbReference type="Gene3D" id="2.120.10.10">
    <property type="match status" value="1"/>
</dbReference>
<dbReference type="HAMAP" id="MF_04071">
    <property type="entry name" value="INFV_NRAM"/>
    <property type="match status" value="1"/>
</dbReference>
<dbReference type="InterPro" id="IPR001860">
    <property type="entry name" value="Glyco_hydro_34"/>
</dbReference>
<dbReference type="InterPro" id="IPR033654">
    <property type="entry name" value="Sialidase_Influenza_A/B"/>
</dbReference>
<dbReference type="InterPro" id="IPR036278">
    <property type="entry name" value="Sialidase_sf"/>
</dbReference>
<dbReference type="Pfam" id="PF00064">
    <property type="entry name" value="Neur"/>
    <property type="match status" value="1"/>
</dbReference>
<dbReference type="SUPFAM" id="SSF50939">
    <property type="entry name" value="Sialidases"/>
    <property type="match status" value="1"/>
</dbReference>
<accession>P03468</accession>
<accession>A4GXH6</accession>
<accession>Q20N35</accession>
<accession>Q84043</accession>
<accession>Q8JUU4</accession>
<name>NRAM_I34A1</name>
<sequence length="454" mass="50121">MNPNQKIITIGSICLVVGLISLILQIGNIISIWISHSIQTGSQNHTGICNQNIITYKNSTWVKDTTSVILTGNSSLCPIRGWAIYSKDNSIRIGSKGDVFVIREPFISCSHLECRTFFLTQGALLNDKHSNGTVKDRSPYRALMSCPVGEAPSPYNSRFESVAWSASACHDGMGWLTIGISGPDNGAVAVLKYNGIITETIKSWRKKILRTQESECACVNGSCFTIMTDGPSDGLASYKIFKIEKGKVTKSIELNAPNSHYEECSCYPDTGKVMCVCRDNWHGSNRPWVSFDQNLDYQIGYICSGVFGDNPRPEDGTGSCGPVYVDGANGVKGFSYRYGNGVWIGRTKSHSSRHGFEMIWDPNGWTETDSKFSVRQDVVAMTDWSGYSGSFVQHPELTGLDCMRPCFWVELIRGRPKEKTIWTSASSISFCGVNSDTVDWSWPDGAELPFSIDK</sequence>
<evidence type="ECO:0000255" key="1">
    <source>
        <dbReference type="HAMAP-Rule" id="MF_04071"/>
    </source>
</evidence>
<organismHost>
    <name type="scientific">Aves</name>
    <dbReference type="NCBI Taxonomy" id="8782"/>
</organismHost>
<organismHost>
    <name type="scientific">Homo sapiens</name>
    <name type="common">Human</name>
    <dbReference type="NCBI Taxonomy" id="9606"/>
</organismHost>
<organismHost>
    <name type="scientific">Sus scrofa</name>
    <name type="common">Pig</name>
    <dbReference type="NCBI Taxonomy" id="9823"/>
</organismHost>
<gene>
    <name evidence="1" type="primary">NA</name>
</gene>
<comment type="function">
    <text evidence="1">Catalyzes the removal of terminal sialic acid residues from viral and cellular glycoconjugates. Cleaves off the terminal sialic acids on the glycosylated HA during virus budding to facilitate virus release. Additionally helps virus spread through the circulation by further removing sialic acids from the cell surface. These cleavages prevent self-aggregation and ensure the efficient spread of the progeny virus from cell to cell. Otherwise, infection would be limited to one round of replication. Described as a receptor-destroying enzyme because it cleaves a terminal sialic acid from the cellular receptors. May facilitate viral invasion of the upper airways by cleaving the sialic acid moieties on the mucin of the airway epithelial cells. Likely to plays a role in the budding process through its association with lipid rafts during intracellular transport. May additionally display a raft-association independent effect on budding. Plays a role in the determination of host range restriction on replication and virulence. Sialidase activity in late endosome/lysosome traffic seems to enhance virus replication.</text>
</comment>
<comment type="catalytic activity">
    <reaction evidence="1">
        <text>Hydrolysis of alpha-(2-&gt;3)-, alpha-(2-&gt;6)-, alpha-(2-&gt;8)- glycosidic linkages of terminal sialic acid residues in oligosaccharides, glycoproteins, glycolipids, colominic acid and synthetic substrates.</text>
        <dbReference type="EC" id="3.2.1.18"/>
    </reaction>
</comment>
<comment type="cofactor">
    <cofactor evidence="1">
        <name>Ca(2+)</name>
        <dbReference type="ChEBI" id="CHEBI:29108"/>
    </cofactor>
</comment>
<comment type="activity regulation">
    <text evidence="1">Inhibited by the neuraminidase inhibitors zanamivir (Relenza) and oseltamivir (Tamiflu). These drugs interfere with the release of progeny virus from infected cells and are effective against all influenza strains. Resistance to neuraminidase inhibitors is quite rare.</text>
</comment>
<comment type="subunit">
    <text evidence="1">Homotetramer.</text>
</comment>
<comment type="subcellular location">
    <subcellularLocation>
        <location evidence="1">Virion membrane</location>
    </subcellularLocation>
    <subcellularLocation>
        <location evidence="1">Host apical cell membrane</location>
        <topology evidence="1">Single-pass type II membrane protein</topology>
    </subcellularLocation>
    <text evidence="1">Preferentially accumulates at the apical plasma membrane in infected polarized epithelial cells, which is the virus assembly site. Uses lipid rafts for cell surface transport and apical sorting. In the virion, forms a mushroom-shaped spike on the surface of the membrane.</text>
</comment>
<comment type="domain">
    <text evidence="1">Intact N-terminus is essential for virion morphogenesis. Possesses two apical sorting signals, one in the ectodomain, which is likely to be a glycan, and the other in the transmembrane domain. The transmembrane domain also plays a role in lipid raft association.</text>
</comment>
<comment type="PTM">
    <text evidence="1">N-glycosylated.</text>
</comment>
<comment type="miscellaneous">
    <text>The influenza A genome consist of 8 RNA segments. Genetic variation of hemagglutinin and/or neuraminidase genes results in the emergence of new influenza strains. The mechanism of variation can be the result of point mutations or the result of genetic reassortment between segments of two different strains.</text>
</comment>
<comment type="similarity">
    <text evidence="1">Belongs to the glycosyl hydrolase 34 family.</text>
</comment>
<organism>
    <name type="scientific">Influenza A virus (strain A/Puerto Rico/8/1934 H1N1)</name>
    <dbReference type="NCBI Taxonomy" id="211044"/>
    <lineage>
        <taxon>Viruses</taxon>
        <taxon>Riboviria</taxon>
        <taxon>Orthornavirae</taxon>
        <taxon>Negarnaviricota</taxon>
        <taxon>Polyploviricotina</taxon>
        <taxon>Insthoviricetes</taxon>
        <taxon>Articulavirales</taxon>
        <taxon>Orthomyxoviridae</taxon>
        <taxon>Alphainfluenzavirus</taxon>
        <taxon>Alphainfluenzavirus influenzae</taxon>
        <taxon>Influenza A virus</taxon>
    </lineage>
</organism>
<feature type="chain" id="PRO_0000078712" description="Neuraminidase">
    <location>
        <begin position="1"/>
        <end position="454"/>
    </location>
</feature>
<feature type="topological domain" description="Intravirion" evidence="1">
    <location>
        <begin position="1"/>
        <end position="6"/>
    </location>
</feature>
<feature type="transmembrane region" description="Helical" evidence="1">
    <location>
        <begin position="7"/>
        <end position="27"/>
    </location>
</feature>
<feature type="topological domain" description="Virion surface" evidence="1">
    <location>
        <begin position="28"/>
        <end position="454"/>
    </location>
</feature>
<feature type="region of interest" description="Involved in apical transport and lipid raft association" evidence="1">
    <location>
        <begin position="11"/>
        <end position="33"/>
    </location>
</feature>
<feature type="region of interest" description="Hypervariable stalk region" evidence="1">
    <location>
        <begin position="36"/>
        <end position="75"/>
    </location>
</feature>
<feature type="region of interest" description="Head of neuraminidase" evidence="1">
    <location>
        <begin position="76"/>
        <end position="454"/>
    </location>
</feature>
<feature type="active site" description="Proton donor/acceptor" evidence="1">
    <location>
        <position position="136"/>
    </location>
</feature>
<feature type="active site" description="Nucleophile" evidence="1">
    <location>
        <position position="387"/>
    </location>
</feature>
<feature type="binding site" evidence="1">
    <location>
        <position position="103"/>
    </location>
    <ligand>
        <name>substrate</name>
    </ligand>
</feature>
<feature type="binding site" evidence="1">
    <location>
        <position position="137"/>
    </location>
    <ligand>
        <name>substrate</name>
    </ligand>
</feature>
<feature type="binding site" evidence="1">
    <location>
        <begin position="262"/>
        <end position="263"/>
    </location>
    <ligand>
        <name>substrate</name>
    </ligand>
</feature>
<feature type="binding site" evidence="1">
    <location>
        <position position="278"/>
    </location>
    <ligand>
        <name>substrate</name>
    </ligand>
</feature>
<feature type="binding site" evidence="1">
    <location>
        <position position="279"/>
    </location>
    <ligand>
        <name>Ca(2+)</name>
        <dbReference type="ChEBI" id="CHEBI:29108"/>
    </ligand>
</feature>
<feature type="binding site" evidence="1">
    <location>
        <position position="283"/>
    </location>
    <ligand>
        <name>Ca(2+)</name>
        <dbReference type="ChEBI" id="CHEBI:29108"/>
    </ligand>
</feature>
<feature type="binding site" evidence="1">
    <location>
        <position position="309"/>
    </location>
    <ligand>
        <name>Ca(2+)</name>
        <dbReference type="ChEBI" id="CHEBI:29108"/>
    </ligand>
</feature>
<feature type="binding site" evidence="1">
    <location>
        <position position="329"/>
    </location>
    <ligand>
        <name>Ca(2+)</name>
        <dbReference type="ChEBI" id="CHEBI:29108"/>
    </ligand>
</feature>
<feature type="binding site" evidence="1">
    <location>
        <position position="353"/>
    </location>
    <ligand>
        <name>substrate</name>
    </ligand>
</feature>
<feature type="glycosylation site" description="N-linked (GlcNAc...) asparagine; by host" evidence="1">
    <location>
        <position position="44"/>
    </location>
</feature>
<feature type="glycosylation site" description="N-linked (GlcNAc...) asparagine; by host" evidence="1">
    <location>
        <position position="58"/>
    </location>
</feature>
<feature type="glycosylation site" description="N-linked (GlcNAc...) asparagine; by host" evidence="1">
    <location>
        <position position="73"/>
    </location>
</feature>
<feature type="glycosylation site" description="N-linked (GlcNAc...) asparagine; by host" evidence="1">
    <location>
        <position position="131"/>
    </location>
</feature>
<feature type="glycosylation site" description="N-linked (GlcNAc...) asparagine; by host" evidence="1">
    <location>
        <position position="220"/>
    </location>
</feature>
<feature type="disulfide bond" evidence="1">
    <location>
        <begin position="77"/>
        <end position="402"/>
    </location>
</feature>
<feature type="disulfide bond" evidence="1">
    <location>
        <begin position="109"/>
        <end position="114"/>
    </location>
</feature>
<feature type="disulfide bond" evidence="1">
    <location>
        <begin position="169"/>
        <end position="216"/>
    </location>
</feature>
<feature type="disulfide bond" evidence="1">
    <location>
        <begin position="218"/>
        <end position="223"/>
    </location>
</feature>
<feature type="disulfide bond" evidence="1">
    <location>
        <begin position="264"/>
        <end position="277"/>
    </location>
</feature>
<feature type="disulfide bond" evidence="1">
    <location>
        <begin position="266"/>
        <end position="275"/>
    </location>
</feature>
<feature type="disulfide bond" evidence="1">
    <location>
        <begin position="303"/>
        <end position="320"/>
    </location>
</feature>
<feature type="disulfide bond" evidence="1">
    <location>
        <begin position="406"/>
        <end position="431"/>
    </location>
</feature>
<feature type="sequence conflict" description="In Ref. 2; AAM75160." ref="2">
    <original>I</original>
    <variation>T</variation>
    <location>
        <position position="8"/>
    </location>
</feature>
<feature type="sequence conflict" description="In Ref. 5; AAA43415." ref="5">
    <original>Q</original>
    <variation>H</variation>
    <location>
        <position position="51"/>
    </location>
</feature>
<feature type="sequence conflict" description="In Ref. 1; AAA43412." ref="1">
    <original>K</original>
    <variation>R</variation>
    <location>
        <position position="128"/>
    </location>
</feature>
<feature type="sequence conflict" description="In Ref. 3; ABO21711 and 4; ABD77678." ref="3 4">
    <original>N</original>
    <variation>S</variation>
    <location>
        <position position="131"/>
    </location>
</feature>
<feature type="sequence conflict" description="In Ref. 1; AAA43412." ref="1">
    <original>E</original>
    <variation>K</variation>
    <location>
        <position position="314"/>
    </location>
</feature>
<feature type="sequence conflict" description="In Ref. 1; AAA43412." ref="1">
    <original>M</original>
    <variation>I</variation>
    <location>
        <position position="403"/>
    </location>
</feature>
<feature type="sequence conflict" description="In Ref. 1; AAA43412." ref="1">
    <original>S</original>
    <variation>T</variation>
    <location>
        <position position="451"/>
    </location>
</feature>